<keyword id="KW-0106">Calcium</keyword>
<keyword id="KW-0222">Digestion</keyword>
<keyword id="KW-1015">Disulfide bond</keyword>
<keyword id="KW-0378">Hydrolase</keyword>
<keyword id="KW-0479">Metal-binding</keyword>
<keyword id="KW-0645">Protease</keyword>
<keyword id="KW-1185">Reference proteome</keyword>
<keyword id="KW-0964">Secreted</keyword>
<keyword id="KW-0720">Serine protease</keyword>
<keyword id="KW-0732">Signal</keyword>
<keyword id="KW-0865">Zymogen</keyword>
<name>TRYB_RAT</name>
<comment type="catalytic activity">
    <reaction>
        <text>Preferential cleavage: Arg-|-Xaa, Lys-|-Xaa.</text>
        <dbReference type="EC" id="3.4.21.4"/>
    </reaction>
</comment>
<comment type="cofactor">
    <cofactor evidence="1">
        <name>Ca(2+)</name>
        <dbReference type="ChEBI" id="CHEBI:29108"/>
    </cofactor>
    <text evidence="1">Binds 1 Ca(2+) ion per subunit.</text>
</comment>
<comment type="subcellular location">
    <subcellularLocation>
        <location>Secreted</location>
        <location>Extracellular space</location>
    </subcellularLocation>
</comment>
<comment type="similarity">
    <text evidence="2">Belongs to the peptidase S1 family.</text>
</comment>
<organism>
    <name type="scientific">Rattus norvegicus</name>
    <name type="common">Rat</name>
    <dbReference type="NCBI Taxonomy" id="10116"/>
    <lineage>
        <taxon>Eukaryota</taxon>
        <taxon>Metazoa</taxon>
        <taxon>Chordata</taxon>
        <taxon>Craniata</taxon>
        <taxon>Vertebrata</taxon>
        <taxon>Euteleostomi</taxon>
        <taxon>Mammalia</taxon>
        <taxon>Eutheria</taxon>
        <taxon>Euarchontoglires</taxon>
        <taxon>Glires</taxon>
        <taxon>Rodentia</taxon>
        <taxon>Myomorpha</taxon>
        <taxon>Muroidea</taxon>
        <taxon>Muridae</taxon>
        <taxon>Murinae</taxon>
        <taxon>Rattus</taxon>
    </lineage>
</organism>
<accession>P32822</accession>
<evidence type="ECO:0000250" key="1"/>
<evidence type="ECO:0000255" key="2">
    <source>
        <dbReference type="PROSITE-ProRule" id="PRU00274"/>
    </source>
</evidence>
<feature type="signal peptide">
    <location>
        <begin position="1"/>
        <end position="15"/>
    </location>
</feature>
<feature type="propeptide" id="PRO_0000028217" description="Activation peptide">
    <location>
        <begin position="16"/>
        <end position="24"/>
    </location>
</feature>
<feature type="chain" id="PRO_0000028218" description="Trypsin V-B">
    <location>
        <begin position="25"/>
        <end position="246"/>
    </location>
</feature>
<feature type="domain" description="Peptidase S1" evidence="2">
    <location>
        <begin position="25"/>
        <end position="244"/>
    </location>
</feature>
<feature type="active site" description="Charge relay system" evidence="1">
    <location>
        <position position="64"/>
    </location>
</feature>
<feature type="active site" description="Charge relay system" evidence="1">
    <location>
        <position position="108"/>
    </location>
</feature>
<feature type="active site" description="Charge relay system" evidence="1">
    <location>
        <position position="200"/>
    </location>
</feature>
<feature type="binding site" evidence="1">
    <location>
        <position position="76"/>
    </location>
    <ligand>
        <name>Ca(2+)</name>
        <dbReference type="ChEBI" id="CHEBI:29108"/>
    </ligand>
</feature>
<feature type="binding site" evidence="1">
    <location>
        <position position="78"/>
    </location>
    <ligand>
        <name>Ca(2+)</name>
        <dbReference type="ChEBI" id="CHEBI:29108"/>
    </ligand>
</feature>
<feature type="binding site" evidence="1">
    <location>
        <position position="86"/>
    </location>
    <ligand>
        <name>Ca(2+)</name>
        <dbReference type="ChEBI" id="CHEBI:29108"/>
    </ligand>
</feature>
<feature type="site" description="Required for specificity" evidence="1">
    <location>
        <position position="194"/>
    </location>
</feature>
<feature type="disulfide bond" evidence="2">
    <location>
        <begin position="31"/>
        <end position="160"/>
    </location>
</feature>
<feature type="disulfide bond" evidence="2">
    <location>
        <begin position="49"/>
        <end position="65"/>
    </location>
</feature>
<feature type="disulfide bond" evidence="2">
    <location>
        <begin position="133"/>
        <end position="233"/>
    </location>
</feature>
<feature type="disulfide bond" evidence="2">
    <location>
        <begin position="140"/>
        <end position="206"/>
    </location>
</feature>
<feature type="disulfide bond" evidence="2">
    <location>
        <begin position="171"/>
        <end position="185"/>
    </location>
</feature>
<feature type="disulfide bond" evidence="2">
    <location>
        <begin position="196"/>
        <end position="220"/>
    </location>
</feature>
<sequence length="246" mass="26820">MKICIFFTLLGTVAAFPTEDNDDRIVGGYTCQEHSVPYQVSLNAGSHICGGSLITDQWVLSAAHCYHPQLQVRLGEHNIYEIEGAEQFIDAAKMILHPDYDKWTVDNDIMLIKLKSPATLNSKVSTIPLPQYCPTAGTECLVSGWGVLKFGFESPSVLQCLDAPVLSDSVCHKAYPRQITNNMFCLGFLEGGKDSCQYDSGGPVVCNGEVQGIVSWGDGCALEGKPGVYTKVCNYLNWIQQTVAAN</sequence>
<proteinExistence type="evidence at transcript level"/>
<dbReference type="EC" id="3.4.21.4"/>
<dbReference type="EMBL" id="X59013">
    <property type="protein sequence ID" value="CAA41752.1"/>
    <property type="molecule type" value="mRNA"/>
</dbReference>
<dbReference type="PIR" id="JQ1472">
    <property type="entry name" value="JQ1472"/>
</dbReference>
<dbReference type="SMR" id="P32822"/>
<dbReference type="FunCoup" id="P32822">
    <property type="interactions" value="28"/>
</dbReference>
<dbReference type="MEROPS" id="S01.093"/>
<dbReference type="AGR" id="RGD:1563848"/>
<dbReference type="InParanoid" id="P32822"/>
<dbReference type="PhylomeDB" id="P32822"/>
<dbReference type="Proteomes" id="UP000002494">
    <property type="component" value="Unplaced"/>
</dbReference>
<dbReference type="GO" id="GO:0005615">
    <property type="term" value="C:extracellular space"/>
    <property type="evidence" value="ECO:0000318"/>
    <property type="project" value="GO_Central"/>
</dbReference>
<dbReference type="GO" id="GO:0046872">
    <property type="term" value="F:metal ion binding"/>
    <property type="evidence" value="ECO:0007669"/>
    <property type="project" value="UniProtKB-KW"/>
</dbReference>
<dbReference type="GO" id="GO:0004252">
    <property type="term" value="F:serine-type endopeptidase activity"/>
    <property type="evidence" value="ECO:0000318"/>
    <property type="project" value="GO_Central"/>
</dbReference>
<dbReference type="GO" id="GO:0007586">
    <property type="term" value="P:digestion"/>
    <property type="evidence" value="ECO:0007669"/>
    <property type="project" value="UniProtKB-KW"/>
</dbReference>
<dbReference type="GO" id="GO:0006508">
    <property type="term" value="P:proteolysis"/>
    <property type="evidence" value="ECO:0007669"/>
    <property type="project" value="UniProtKB-KW"/>
</dbReference>
<dbReference type="CDD" id="cd00190">
    <property type="entry name" value="Tryp_SPc"/>
    <property type="match status" value="1"/>
</dbReference>
<dbReference type="FunFam" id="2.40.10.10:FF:000005">
    <property type="entry name" value="Serine protease 37"/>
    <property type="match status" value="1"/>
</dbReference>
<dbReference type="Gene3D" id="2.40.10.10">
    <property type="entry name" value="Trypsin-like serine proteases"/>
    <property type="match status" value="2"/>
</dbReference>
<dbReference type="InterPro" id="IPR009003">
    <property type="entry name" value="Peptidase_S1_PA"/>
</dbReference>
<dbReference type="InterPro" id="IPR043504">
    <property type="entry name" value="Peptidase_S1_PA_chymotrypsin"/>
</dbReference>
<dbReference type="InterPro" id="IPR001314">
    <property type="entry name" value="Peptidase_S1A"/>
</dbReference>
<dbReference type="InterPro" id="IPR050127">
    <property type="entry name" value="Serine_Proteases_S1"/>
</dbReference>
<dbReference type="InterPro" id="IPR001254">
    <property type="entry name" value="Trypsin_dom"/>
</dbReference>
<dbReference type="InterPro" id="IPR018114">
    <property type="entry name" value="TRYPSIN_HIS"/>
</dbReference>
<dbReference type="PANTHER" id="PTHR24264:SF15">
    <property type="entry name" value="RIKEN CDNA 2210010C04 GENE"/>
    <property type="match status" value="1"/>
</dbReference>
<dbReference type="PANTHER" id="PTHR24264">
    <property type="entry name" value="TRYPSIN-RELATED"/>
    <property type="match status" value="1"/>
</dbReference>
<dbReference type="Pfam" id="PF00089">
    <property type="entry name" value="Trypsin"/>
    <property type="match status" value="1"/>
</dbReference>
<dbReference type="PRINTS" id="PR00722">
    <property type="entry name" value="CHYMOTRYPSIN"/>
</dbReference>
<dbReference type="SMART" id="SM00020">
    <property type="entry name" value="Tryp_SPc"/>
    <property type="match status" value="1"/>
</dbReference>
<dbReference type="SUPFAM" id="SSF50494">
    <property type="entry name" value="Trypsin-like serine proteases"/>
    <property type="match status" value="1"/>
</dbReference>
<dbReference type="PROSITE" id="PS50240">
    <property type="entry name" value="TRYPSIN_DOM"/>
    <property type="match status" value="1"/>
</dbReference>
<dbReference type="PROSITE" id="PS00134">
    <property type="entry name" value="TRYPSIN_HIS"/>
    <property type="match status" value="1"/>
</dbReference>
<protein>
    <recommendedName>
        <fullName>Trypsin V-B</fullName>
        <ecNumber>3.4.21.4</ecNumber>
    </recommendedName>
</protein>
<reference key="1">
    <citation type="journal article" date="1992" name="Gene">
        <title>Identification of cDNAs encoding two novel rat pancreatic serine proteases.</title>
        <authorList>
            <person name="Kang J."/>
            <person name="Wiegand U."/>
            <person name="Mueller-Hill B."/>
        </authorList>
    </citation>
    <scope>NUCLEOTIDE SEQUENCE [MRNA]</scope>
    <source>
        <tissue>Pancreas</tissue>
    </source>
</reference>